<protein>
    <recommendedName>
        <fullName evidence="1">Cytochrome c-type biogenesis protein CcmE</fullName>
    </recommendedName>
    <alternativeName>
        <fullName evidence="1">Cytochrome c maturation protein E</fullName>
    </alternativeName>
    <alternativeName>
        <fullName evidence="1">Heme chaperone CcmE</fullName>
    </alternativeName>
</protein>
<proteinExistence type="inferred from homology"/>
<comment type="function">
    <text evidence="1">Heme chaperone required for the biogenesis of c-type cytochromes. Transiently binds heme delivered by CcmC and transfers the heme to apo-cytochromes in a process facilitated by CcmF and CcmH.</text>
</comment>
<comment type="subcellular location">
    <subcellularLocation>
        <location evidence="1">Cell inner membrane</location>
        <topology evidence="1">Single-pass type II membrane protein</topology>
        <orientation evidence="1">Periplasmic side</orientation>
    </subcellularLocation>
</comment>
<comment type="similarity">
    <text evidence="1">Belongs to the CcmE/CycJ family.</text>
</comment>
<name>CCME_STUS1</name>
<organism>
    <name type="scientific">Stutzerimonas stutzeri (strain A1501)</name>
    <name type="common">Pseudomonas stutzeri</name>
    <dbReference type="NCBI Taxonomy" id="379731"/>
    <lineage>
        <taxon>Bacteria</taxon>
        <taxon>Pseudomonadati</taxon>
        <taxon>Pseudomonadota</taxon>
        <taxon>Gammaproteobacteria</taxon>
        <taxon>Pseudomonadales</taxon>
        <taxon>Pseudomonadaceae</taxon>
        <taxon>Stutzerimonas</taxon>
    </lineage>
</organism>
<sequence length="155" mass="16610">MNPVRKKRLFIVLAILAGVGIAVALALSALQQNINLFYTPSQIAAGEAPEGTRIRAGGLVEEGSVKRTNDSLSVAFRVTDGAQAITITYQGILPDLFREGQGIVALGRVNADGVLVADEVLAKHDENYMPPEVTQALEKSGMMKHYEGGKQEYAK</sequence>
<dbReference type="EMBL" id="CP000304">
    <property type="protein sequence ID" value="ABP80201.1"/>
    <property type="molecule type" value="Genomic_DNA"/>
</dbReference>
<dbReference type="RefSeq" id="WP_011913663.1">
    <property type="nucleotide sequence ID" value="NC_009434.1"/>
</dbReference>
<dbReference type="SMR" id="A4VMK0"/>
<dbReference type="GeneID" id="66820812"/>
<dbReference type="KEGG" id="psa:PST_2551"/>
<dbReference type="eggNOG" id="COG2332">
    <property type="taxonomic scope" value="Bacteria"/>
</dbReference>
<dbReference type="HOGENOM" id="CLU_079503_1_1_6"/>
<dbReference type="Proteomes" id="UP000000233">
    <property type="component" value="Chromosome"/>
</dbReference>
<dbReference type="GO" id="GO:0005886">
    <property type="term" value="C:plasma membrane"/>
    <property type="evidence" value="ECO:0007669"/>
    <property type="project" value="UniProtKB-SubCell"/>
</dbReference>
<dbReference type="GO" id="GO:0020037">
    <property type="term" value="F:heme binding"/>
    <property type="evidence" value="ECO:0007669"/>
    <property type="project" value="InterPro"/>
</dbReference>
<dbReference type="GO" id="GO:0046872">
    <property type="term" value="F:metal ion binding"/>
    <property type="evidence" value="ECO:0007669"/>
    <property type="project" value="UniProtKB-KW"/>
</dbReference>
<dbReference type="GO" id="GO:0017004">
    <property type="term" value="P:cytochrome complex assembly"/>
    <property type="evidence" value="ECO:0007669"/>
    <property type="project" value="UniProtKB-KW"/>
</dbReference>
<dbReference type="FunFam" id="2.40.50.140:FF:000104">
    <property type="entry name" value="Cytochrome c-type biogenesis protein CcmE"/>
    <property type="match status" value="1"/>
</dbReference>
<dbReference type="Gene3D" id="2.40.50.140">
    <property type="entry name" value="Nucleic acid-binding proteins"/>
    <property type="match status" value="1"/>
</dbReference>
<dbReference type="HAMAP" id="MF_01959">
    <property type="entry name" value="CcmE"/>
    <property type="match status" value="1"/>
</dbReference>
<dbReference type="InterPro" id="IPR004329">
    <property type="entry name" value="CcmE"/>
</dbReference>
<dbReference type="InterPro" id="IPR036127">
    <property type="entry name" value="CcmE-like_sf"/>
</dbReference>
<dbReference type="InterPro" id="IPR012340">
    <property type="entry name" value="NA-bd_OB-fold"/>
</dbReference>
<dbReference type="NCBIfam" id="NF009638">
    <property type="entry name" value="PRK13165.1"/>
    <property type="match status" value="1"/>
</dbReference>
<dbReference type="NCBIfam" id="NF009727">
    <property type="entry name" value="PRK13254.1-1"/>
    <property type="match status" value="1"/>
</dbReference>
<dbReference type="NCBIfam" id="NF009729">
    <property type="entry name" value="PRK13254.1-3"/>
    <property type="match status" value="1"/>
</dbReference>
<dbReference type="NCBIfam" id="NF009731">
    <property type="entry name" value="PRK13254.1-5"/>
    <property type="match status" value="1"/>
</dbReference>
<dbReference type="PANTHER" id="PTHR34128">
    <property type="entry name" value="CYTOCHROME C-TYPE BIOGENESIS PROTEIN CCME HOMOLOG, MITOCHONDRIAL"/>
    <property type="match status" value="1"/>
</dbReference>
<dbReference type="PANTHER" id="PTHR34128:SF2">
    <property type="entry name" value="CYTOCHROME C-TYPE BIOGENESIS PROTEIN CCME HOMOLOG, MITOCHONDRIAL"/>
    <property type="match status" value="1"/>
</dbReference>
<dbReference type="Pfam" id="PF03100">
    <property type="entry name" value="CcmE"/>
    <property type="match status" value="1"/>
</dbReference>
<dbReference type="SUPFAM" id="SSF82093">
    <property type="entry name" value="Heme chaperone CcmE"/>
    <property type="match status" value="1"/>
</dbReference>
<feature type="chain" id="PRO_1000070835" description="Cytochrome c-type biogenesis protein CcmE">
    <location>
        <begin position="1"/>
        <end position="155"/>
    </location>
</feature>
<feature type="topological domain" description="Cytoplasmic" evidence="1">
    <location>
        <begin position="1"/>
        <end position="8"/>
    </location>
</feature>
<feature type="transmembrane region" description="Helical; Signal-anchor for type II membrane protein" evidence="1">
    <location>
        <begin position="9"/>
        <end position="29"/>
    </location>
</feature>
<feature type="topological domain" description="Periplasmic" evidence="1">
    <location>
        <begin position="30"/>
        <end position="155"/>
    </location>
</feature>
<feature type="binding site" description="covalent" evidence="1">
    <location>
        <position position="124"/>
    </location>
    <ligand>
        <name>heme</name>
        <dbReference type="ChEBI" id="CHEBI:30413"/>
    </ligand>
</feature>
<feature type="binding site" description="axial binding residue" evidence="1">
    <location>
        <position position="128"/>
    </location>
    <ligand>
        <name>heme</name>
        <dbReference type="ChEBI" id="CHEBI:30413"/>
    </ligand>
    <ligandPart>
        <name>Fe</name>
        <dbReference type="ChEBI" id="CHEBI:18248"/>
    </ligandPart>
</feature>
<reference key="1">
    <citation type="journal article" date="2008" name="Proc. Natl. Acad. Sci. U.S.A.">
        <title>Nitrogen fixation island and rhizosphere competence traits in the genome of root-associated Pseudomonas stutzeri A1501.</title>
        <authorList>
            <person name="Yan Y."/>
            <person name="Yang J."/>
            <person name="Dou Y."/>
            <person name="Chen M."/>
            <person name="Ping S."/>
            <person name="Peng J."/>
            <person name="Lu W."/>
            <person name="Zhang W."/>
            <person name="Yao Z."/>
            <person name="Li H."/>
            <person name="Liu W."/>
            <person name="He S."/>
            <person name="Geng L."/>
            <person name="Zhang X."/>
            <person name="Yang F."/>
            <person name="Yu H."/>
            <person name="Zhan Y."/>
            <person name="Li D."/>
            <person name="Lin Z."/>
            <person name="Wang Y."/>
            <person name="Elmerich C."/>
            <person name="Lin M."/>
            <person name="Jin Q."/>
        </authorList>
    </citation>
    <scope>NUCLEOTIDE SEQUENCE [LARGE SCALE GENOMIC DNA]</scope>
    <source>
        <strain>A1501</strain>
    </source>
</reference>
<evidence type="ECO:0000255" key="1">
    <source>
        <dbReference type="HAMAP-Rule" id="MF_01959"/>
    </source>
</evidence>
<gene>
    <name evidence="1" type="primary">ccmE</name>
    <name evidence="1" type="synonym">cycJ</name>
    <name type="ordered locus">PST_2551</name>
</gene>
<accession>A4VMK0</accession>
<keyword id="KW-0997">Cell inner membrane</keyword>
<keyword id="KW-1003">Cell membrane</keyword>
<keyword id="KW-0201">Cytochrome c-type biogenesis</keyword>
<keyword id="KW-0349">Heme</keyword>
<keyword id="KW-0408">Iron</keyword>
<keyword id="KW-0472">Membrane</keyword>
<keyword id="KW-0479">Metal-binding</keyword>
<keyword id="KW-1185">Reference proteome</keyword>
<keyword id="KW-0735">Signal-anchor</keyword>
<keyword id="KW-0812">Transmembrane</keyword>
<keyword id="KW-1133">Transmembrane helix</keyword>